<proteinExistence type="inferred from homology"/>
<reference key="1">
    <citation type="journal article" date="2010" name="Genome Biol.">
        <title>Structure and dynamics of the pan-genome of Streptococcus pneumoniae and closely related species.</title>
        <authorList>
            <person name="Donati C."/>
            <person name="Hiller N.L."/>
            <person name="Tettelin H."/>
            <person name="Muzzi A."/>
            <person name="Croucher N.J."/>
            <person name="Angiuoli S.V."/>
            <person name="Oggioni M."/>
            <person name="Dunning Hotopp J.C."/>
            <person name="Hu F.Z."/>
            <person name="Riley D.R."/>
            <person name="Covacci A."/>
            <person name="Mitchell T.J."/>
            <person name="Bentley S.D."/>
            <person name="Kilian M."/>
            <person name="Ehrlich G.D."/>
            <person name="Rappuoli R."/>
            <person name="Moxon E.R."/>
            <person name="Masignani V."/>
        </authorList>
    </citation>
    <scope>NUCLEOTIDE SEQUENCE [LARGE SCALE GENOMIC DNA]</scope>
    <source>
        <strain>JJA</strain>
    </source>
</reference>
<gene>
    <name evidence="1" type="primary">aroB</name>
    <name type="ordered locus">SPJ_1275</name>
</gene>
<accession>C1CEW4</accession>
<organism>
    <name type="scientific">Streptococcus pneumoniae (strain JJA)</name>
    <dbReference type="NCBI Taxonomy" id="488222"/>
    <lineage>
        <taxon>Bacteria</taxon>
        <taxon>Bacillati</taxon>
        <taxon>Bacillota</taxon>
        <taxon>Bacilli</taxon>
        <taxon>Lactobacillales</taxon>
        <taxon>Streptococcaceae</taxon>
        <taxon>Streptococcus</taxon>
    </lineage>
</organism>
<sequence length="355" mass="39120">MKIRIDIPHHPYDIQIEKGCMAQAGQWLRELWQPQKVVIVTDNHVASLYAEKVKLSLEDAGFQVAVFDFLEGEERKNLTTVQKVYEFLVKQGLTRSDGIVALGGGVVGDLAGFVASTYMRGIHFVQIPTSLTAQVDSSIGGKTGVNTPFAKNMVGTFAQPDGVLIDPLVLETLGKRELIEGMGEVIKYGLIEDPELWALLTELNGSVESILEHAETLIEHSCQVKRKMVVEDELDNGIRLYLNFGHTIGHAIEATAGYGKVMHGEAVAMGMVQISKVAEEKGLMPAGITQSITEMCQKFGLPVDYENWEVDKLYQALTHDKKTRGNTLKLVLVSELGSAIIHPVSLEEMKDYLVK</sequence>
<protein>
    <recommendedName>
        <fullName evidence="1">3-dehydroquinate synthase</fullName>
        <shortName evidence="1">DHQS</shortName>
        <ecNumber evidence="1">4.2.3.4</ecNumber>
    </recommendedName>
</protein>
<comment type="function">
    <text evidence="1">Catalyzes the conversion of 3-deoxy-D-arabino-heptulosonate 7-phosphate (DAHP) to dehydroquinate (DHQ).</text>
</comment>
<comment type="catalytic activity">
    <reaction evidence="1">
        <text>7-phospho-2-dehydro-3-deoxy-D-arabino-heptonate = 3-dehydroquinate + phosphate</text>
        <dbReference type="Rhea" id="RHEA:21968"/>
        <dbReference type="ChEBI" id="CHEBI:32364"/>
        <dbReference type="ChEBI" id="CHEBI:43474"/>
        <dbReference type="ChEBI" id="CHEBI:58394"/>
        <dbReference type="EC" id="4.2.3.4"/>
    </reaction>
</comment>
<comment type="cofactor">
    <cofactor evidence="1">
        <name>Co(2+)</name>
        <dbReference type="ChEBI" id="CHEBI:48828"/>
    </cofactor>
    <cofactor evidence="1">
        <name>Zn(2+)</name>
        <dbReference type="ChEBI" id="CHEBI:29105"/>
    </cofactor>
    <text evidence="1">Binds 1 divalent metal cation per subunit. Can use either Co(2+) or Zn(2+).</text>
</comment>
<comment type="cofactor">
    <cofactor evidence="1">
        <name>NAD(+)</name>
        <dbReference type="ChEBI" id="CHEBI:57540"/>
    </cofactor>
</comment>
<comment type="pathway">
    <text evidence="1">Metabolic intermediate biosynthesis; chorismate biosynthesis; chorismate from D-erythrose 4-phosphate and phosphoenolpyruvate: step 2/7.</text>
</comment>
<comment type="subcellular location">
    <subcellularLocation>
        <location evidence="1">Cytoplasm</location>
    </subcellularLocation>
</comment>
<comment type="similarity">
    <text evidence="1">Belongs to the sugar phosphate cyclases superfamily. Dehydroquinate synthase family.</text>
</comment>
<evidence type="ECO:0000255" key="1">
    <source>
        <dbReference type="HAMAP-Rule" id="MF_00110"/>
    </source>
</evidence>
<dbReference type="EC" id="4.2.3.4" evidence="1"/>
<dbReference type="EMBL" id="CP000919">
    <property type="protein sequence ID" value="ACO18145.1"/>
    <property type="molecule type" value="Genomic_DNA"/>
</dbReference>
<dbReference type="RefSeq" id="WP_000702159.1">
    <property type="nucleotide sequence ID" value="NC_012466.1"/>
</dbReference>
<dbReference type="SMR" id="C1CEW4"/>
<dbReference type="KEGG" id="sjj:SPJ_1275"/>
<dbReference type="HOGENOM" id="CLU_001201_0_2_9"/>
<dbReference type="UniPathway" id="UPA00053">
    <property type="reaction ID" value="UER00085"/>
</dbReference>
<dbReference type="Proteomes" id="UP000002206">
    <property type="component" value="Chromosome"/>
</dbReference>
<dbReference type="GO" id="GO:0005737">
    <property type="term" value="C:cytoplasm"/>
    <property type="evidence" value="ECO:0007669"/>
    <property type="project" value="UniProtKB-SubCell"/>
</dbReference>
<dbReference type="GO" id="GO:0003856">
    <property type="term" value="F:3-dehydroquinate synthase activity"/>
    <property type="evidence" value="ECO:0007669"/>
    <property type="project" value="UniProtKB-UniRule"/>
</dbReference>
<dbReference type="GO" id="GO:0046872">
    <property type="term" value="F:metal ion binding"/>
    <property type="evidence" value="ECO:0007669"/>
    <property type="project" value="UniProtKB-KW"/>
</dbReference>
<dbReference type="GO" id="GO:0000166">
    <property type="term" value="F:nucleotide binding"/>
    <property type="evidence" value="ECO:0007669"/>
    <property type="project" value="UniProtKB-KW"/>
</dbReference>
<dbReference type="GO" id="GO:0008652">
    <property type="term" value="P:amino acid biosynthetic process"/>
    <property type="evidence" value="ECO:0007669"/>
    <property type="project" value="UniProtKB-KW"/>
</dbReference>
<dbReference type="GO" id="GO:0009073">
    <property type="term" value="P:aromatic amino acid family biosynthetic process"/>
    <property type="evidence" value="ECO:0007669"/>
    <property type="project" value="UniProtKB-KW"/>
</dbReference>
<dbReference type="GO" id="GO:0009423">
    <property type="term" value="P:chorismate biosynthetic process"/>
    <property type="evidence" value="ECO:0007669"/>
    <property type="project" value="UniProtKB-UniRule"/>
</dbReference>
<dbReference type="CDD" id="cd08195">
    <property type="entry name" value="DHQS"/>
    <property type="match status" value="1"/>
</dbReference>
<dbReference type="FunFam" id="1.20.1090.10:FF:000012">
    <property type="entry name" value="3-dehydroquinate synthase"/>
    <property type="match status" value="1"/>
</dbReference>
<dbReference type="FunFam" id="3.40.50.1970:FF:000001">
    <property type="entry name" value="3-dehydroquinate synthase"/>
    <property type="match status" value="1"/>
</dbReference>
<dbReference type="Gene3D" id="3.40.50.1970">
    <property type="match status" value="1"/>
</dbReference>
<dbReference type="Gene3D" id="1.20.1090.10">
    <property type="entry name" value="Dehydroquinate synthase-like - alpha domain"/>
    <property type="match status" value="1"/>
</dbReference>
<dbReference type="HAMAP" id="MF_00110">
    <property type="entry name" value="DHQ_synthase"/>
    <property type="match status" value="1"/>
</dbReference>
<dbReference type="InterPro" id="IPR050071">
    <property type="entry name" value="Dehydroquinate_synthase"/>
</dbReference>
<dbReference type="InterPro" id="IPR016037">
    <property type="entry name" value="DHQ_synth_AroB"/>
</dbReference>
<dbReference type="InterPro" id="IPR030963">
    <property type="entry name" value="DHQ_synth_fam"/>
</dbReference>
<dbReference type="InterPro" id="IPR030960">
    <property type="entry name" value="DHQS/DOIS_N"/>
</dbReference>
<dbReference type="InterPro" id="IPR056179">
    <property type="entry name" value="DHQS_C"/>
</dbReference>
<dbReference type="NCBIfam" id="TIGR01357">
    <property type="entry name" value="aroB"/>
    <property type="match status" value="1"/>
</dbReference>
<dbReference type="PANTHER" id="PTHR43622">
    <property type="entry name" value="3-DEHYDROQUINATE SYNTHASE"/>
    <property type="match status" value="1"/>
</dbReference>
<dbReference type="PANTHER" id="PTHR43622:SF7">
    <property type="entry name" value="3-DEHYDROQUINATE SYNTHASE, CHLOROPLASTIC"/>
    <property type="match status" value="1"/>
</dbReference>
<dbReference type="Pfam" id="PF01761">
    <property type="entry name" value="DHQ_synthase"/>
    <property type="match status" value="1"/>
</dbReference>
<dbReference type="Pfam" id="PF24621">
    <property type="entry name" value="DHQS_C"/>
    <property type="match status" value="1"/>
</dbReference>
<dbReference type="PIRSF" id="PIRSF001455">
    <property type="entry name" value="DHQ_synth"/>
    <property type="match status" value="1"/>
</dbReference>
<dbReference type="SUPFAM" id="SSF56796">
    <property type="entry name" value="Dehydroquinate synthase-like"/>
    <property type="match status" value="1"/>
</dbReference>
<name>AROB_STRZJ</name>
<feature type="chain" id="PRO_1000119095" description="3-dehydroquinate synthase">
    <location>
        <begin position="1"/>
        <end position="355"/>
    </location>
</feature>
<feature type="binding site" evidence="1">
    <location>
        <begin position="71"/>
        <end position="76"/>
    </location>
    <ligand>
        <name>NAD(+)</name>
        <dbReference type="ChEBI" id="CHEBI:57540"/>
    </ligand>
</feature>
<feature type="binding site" evidence="1">
    <location>
        <begin position="105"/>
        <end position="109"/>
    </location>
    <ligand>
        <name>NAD(+)</name>
        <dbReference type="ChEBI" id="CHEBI:57540"/>
    </ligand>
</feature>
<feature type="binding site" evidence="1">
    <location>
        <begin position="129"/>
        <end position="130"/>
    </location>
    <ligand>
        <name>NAD(+)</name>
        <dbReference type="ChEBI" id="CHEBI:57540"/>
    </ligand>
</feature>
<feature type="binding site" evidence="1">
    <location>
        <position position="142"/>
    </location>
    <ligand>
        <name>NAD(+)</name>
        <dbReference type="ChEBI" id="CHEBI:57540"/>
    </ligand>
</feature>
<feature type="binding site" evidence="1">
    <location>
        <position position="151"/>
    </location>
    <ligand>
        <name>NAD(+)</name>
        <dbReference type="ChEBI" id="CHEBI:57540"/>
    </ligand>
</feature>
<feature type="binding site" evidence="1">
    <location>
        <position position="184"/>
    </location>
    <ligand>
        <name>Zn(2+)</name>
        <dbReference type="ChEBI" id="CHEBI:29105"/>
    </ligand>
</feature>
<feature type="binding site" evidence="1">
    <location>
        <position position="246"/>
    </location>
    <ligand>
        <name>Zn(2+)</name>
        <dbReference type="ChEBI" id="CHEBI:29105"/>
    </ligand>
</feature>
<feature type="binding site" evidence="1">
    <location>
        <position position="263"/>
    </location>
    <ligand>
        <name>Zn(2+)</name>
        <dbReference type="ChEBI" id="CHEBI:29105"/>
    </ligand>
</feature>
<keyword id="KW-0028">Amino-acid biosynthesis</keyword>
<keyword id="KW-0057">Aromatic amino acid biosynthesis</keyword>
<keyword id="KW-0170">Cobalt</keyword>
<keyword id="KW-0963">Cytoplasm</keyword>
<keyword id="KW-0456">Lyase</keyword>
<keyword id="KW-0479">Metal-binding</keyword>
<keyword id="KW-0520">NAD</keyword>
<keyword id="KW-0547">Nucleotide-binding</keyword>
<keyword id="KW-0862">Zinc</keyword>